<feature type="chain" id="PRO_1000018422" description="Tryptophan synthase beta chain">
    <location>
        <begin position="1"/>
        <end position="405"/>
    </location>
</feature>
<feature type="modified residue" description="N6-(pyridoxal phosphate)lysine" evidence="1">
    <location>
        <position position="98"/>
    </location>
</feature>
<name>TRPB_XANC8</name>
<reference key="1">
    <citation type="journal article" date="2005" name="Genome Res.">
        <title>Comparative and functional genomic analyses of the pathogenicity of phytopathogen Xanthomonas campestris pv. campestris.</title>
        <authorList>
            <person name="Qian W."/>
            <person name="Jia Y."/>
            <person name="Ren S.-X."/>
            <person name="He Y.-Q."/>
            <person name="Feng J.-X."/>
            <person name="Lu L.-F."/>
            <person name="Sun Q."/>
            <person name="Ying G."/>
            <person name="Tang D.-J."/>
            <person name="Tang H."/>
            <person name="Wu W."/>
            <person name="Hao P."/>
            <person name="Wang L."/>
            <person name="Jiang B.-L."/>
            <person name="Zeng S."/>
            <person name="Gu W.-Y."/>
            <person name="Lu G."/>
            <person name="Rong L."/>
            <person name="Tian Y."/>
            <person name="Yao Z."/>
            <person name="Fu G."/>
            <person name="Chen B."/>
            <person name="Fang R."/>
            <person name="Qiang B."/>
            <person name="Chen Z."/>
            <person name="Zhao G.-P."/>
            <person name="Tang J.-L."/>
            <person name="He C."/>
        </authorList>
    </citation>
    <scope>NUCLEOTIDE SEQUENCE [LARGE SCALE GENOMIC DNA]</scope>
    <source>
        <strain>8004</strain>
    </source>
</reference>
<gene>
    <name evidence="1" type="primary">trpB</name>
    <name type="ordered locus">XC_1575</name>
</gene>
<sequence>MSAQPISDFHAYPDAAGHFGKFGGRFVAETLIAPLQELSAAYDLARQDPAFIAEYDKDLKHYVGRPSPIYHAERLSREVGGAQILLKREDLNHTGAHKINNTIGQALLASRMGKTRIIAETGAGQHGVASATVAARLGLECVVYMGATDIERQKINVYRMQLLGAKVIPVTSGSATLKDALNEAMRDWVSNVQDTFYIIGTVAGPDPYPRMVRDFNAIVGREARAQMLEDYGRLPDAISACVGGGSNAIGLFHAFLNDPGVKIYGAEAAGDGIASGRHAASIAAGRPGVLHGNRTYVICDDDGQIIETHSVSAGLDYPGVGPEHAFLSDSGRAVYQGITDDEALAAFHLLAHTEGILAALESSHAVAQSIKLAREMPKDALVLCNLSGRGDKDVHTIAAREGMVL</sequence>
<organism>
    <name type="scientific">Xanthomonas campestris pv. campestris (strain 8004)</name>
    <dbReference type="NCBI Taxonomy" id="314565"/>
    <lineage>
        <taxon>Bacteria</taxon>
        <taxon>Pseudomonadati</taxon>
        <taxon>Pseudomonadota</taxon>
        <taxon>Gammaproteobacteria</taxon>
        <taxon>Lysobacterales</taxon>
        <taxon>Lysobacteraceae</taxon>
        <taxon>Xanthomonas</taxon>
    </lineage>
</organism>
<keyword id="KW-0028">Amino-acid biosynthesis</keyword>
<keyword id="KW-0057">Aromatic amino acid biosynthesis</keyword>
<keyword id="KW-0456">Lyase</keyword>
<keyword id="KW-0663">Pyridoxal phosphate</keyword>
<keyword id="KW-0822">Tryptophan biosynthesis</keyword>
<protein>
    <recommendedName>
        <fullName evidence="1">Tryptophan synthase beta chain</fullName>
        <ecNumber evidence="1">4.2.1.20</ecNumber>
    </recommendedName>
</protein>
<evidence type="ECO:0000255" key="1">
    <source>
        <dbReference type="HAMAP-Rule" id="MF_00133"/>
    </source>
</evidence>
<proteinExistence type="inferred from homology"/>
<comment type="function">
    <text evidence="1">The beta subunit is responsible for the synthesis of L-tryptophan from indole and L-serine.</text>
</comment>
<comment type="catalytic activity">
    <reaction evidence="1">
        <text>(1S,2R)-1-C-(indol-3-yl)glycerol 3-phosphate + L-serine = D-glyceraldehyde 3-phosphate + L-tryptophan + H2O</text>
        <dbReference type="Rhea" id="RHEA:10532"/>
        <dbReference type="ChEBI" id="CHEBI:15377"/>
        <dbReference type="ChEBI" id="CHEBI:33384"/>
        <dbReference type="ChEBI" id="CHEBI:57912"/>
        <dbReference type="ChEBI" id="CHEBI:58866"/>
        <dbReference type="ChEBI" id="CHEBI:59776"/>
        <dbReference type="EC" id="4.2.1.20"/>
    </reaction>
</comment>
<comment type="cofactor">
    <cofactor evidence="1">
        <name>pyridoxal 5'-phosphate</name>
        <dbReference type="ChEBI" id="CHEBI:597326"/>
    </cofactor>
</comment>
<comment type="pathway">
    <text evidence="1">Amino-acid biosynthesis; L-tryptophan biosynthesis; L-tryptophan from chorismate: step 5/5.</text>
</comment>
<comment type="subunit">
    <text evidence="1">Tetramer of two alpha and two beta chains.</text>
</comment>
<comment type="similarity">
    <text evidence="1">Belongs to the TrpB family.</text>
</comment>
<dbReference type="EC" id="4.2.1.20" evidence="1"/>
<dbReference type="EMBL" id="CP000050">
    <property type="protein sequence ID" value="AAY48641.1"/>
    <property type="molecule type" value="Genomic_DNA"/>
</dbReference>
<dbReference type="RefSeq" id="WP_011037673.1">
    <property type="nucleotide sequence ID" value="NZ_CP155948.1"/>
</dbReference>
<dbReference type="SMR" id="Q4UWD2"/>
<dbReference type="GeneID" id="58012851"/>
<dbReference type="KEGG" id="xcb:XC_1575"/>
<dbReference type="HOGENOM" id="CLU_016734_3_1_6"/>
<dbReference type="UniPathway" id="UPA00035">
    <property type="reaction ID" value="UER00044"/>
</dbReference>
<dbReference type="Proteomes" id="UP000000420">
    <property type="component" value="Chromosome"/>
</dbReference>
<dbReference type="GO" id="GO:0005737">
    <property type="term" value="C:cytoplasm"/>
    <property type="evidence" value="ECO:0007669"/>
    <property type="project" value="TreeGrafter"/>
</dbReference>
<dbReference type="GO" id="GO:0004834">
    <property type="term" value="F:tryptophan synthase activity"/>
    <property type="evidence" value="ECO:0007669"/>
    <property type="project" value="UniProtKB-UniRule"/>
</dbReference>
<dbReference type="CDD" id="cd06446">
    <property type="entry name" value="Trp-synth_B"/>
    <property type="match status" value="1"/>
</dbReference>
<dbReference type="FunFam" id="3.40.50.1100:FF:000001">
    <property type="entry name" value="Tryptophan synthase beta chain"/>
    <property type="match status" value="1"/>
</dbReference>
<dbReference type="FunFam" id="3.40.50.1100:FF:000004">
    <property type="entry name" value="Tryptophan synthase beta chain"/>
    <property type="match status" value="1"/>
</dbReference>
<dbReference type="Gene3D" id="3.40.50.1100">
    <property type="match status" value="2"/>
</dbReference>
<dbReference type="HAMAP" id="MF_00133">
    <property type="entry name" value="Trp_synth_beta"/>
    <property type="match status" value="1"/>
</dbReference>
<dbReference type="InterPro" id="IPR006653">
    <property type="entry name" value="Trp_synth_b_CS"/>
</dbReference>
<dbReference type="InterPro" id="IPR006654">
    <property type="entry name" value="Trp_synth_beta"/>
</dbReference>
<dbReference type="InterPro" id="IPR023026">
    <property type="entry name" value="Trp_synth_beta/beta-like"/>
</dbReference>
<dbReference type="InterPro" id="IPR001926">
    <property type="entry name" value="TrpB-like_PALP"/>
</dbReference>
<dbReference type="InterPro" id="IPR036052">
    <property type="entry name" value="TrpB-like_PALP_sf"/>
</dbReference>
<dbReference type="NCBIfam" id="TIGR00263">
    <property type="entry name" value="trpB"/>
    <property type="match status" value="1"/>
</dbReference>
<dbReference type="PANTHER" id="PTHR48077:SF3">
    <property type="entry name" value="TRYPTOPHAN SYNTHASE"/>
    <property type="match status" value="1"/>
</dbReference>
<dbReference type="PANTHER" id="PTHR48077">
    <property type="entry name" value="TRYPTOPHAN SYNTHASE-RELATED"/>
    <property type="match status" value="1"/>
</dbReference>
<dbReference type="Pfam" id="PF00291">
    <property type="entry name" value="PALP"/>
    <property type="match status" value="1"/>
</dbReference>
<dbReference type="PIRSF" id="PIRSF001413">
    <property type="entry name" value="Trp_syn_beta"/>
    <property type="match status" value="1"/>
</dbReference>
<dbReference type="SUPFAM" id="SSF53686">
    <property type="entry name" value="Tryptophan synthase beta subunit-like PLP-dependent enzymes"/>
    <property type="match status" value="1"/>
</dbReference>
<dbReference type="PROSITE" id="PS00168">
    <property type="entry name" value="TRP_SYNTHASE_BETA"/>
    <property type="match status" value="1"/>
</dbReference>
<accession>Q4UWD2</accession>